<accession>Q9KD37</accession>
<protein>
    <recommendedName>
        <fullName evidence="1">4-hydroxy-3-methylbut-2-enyl diphosphate reductase</fullName>
        <shortName evidence="1">HMBPP reductase</shortName>
        <ecNumber evidence="1">1.17.7.4</ecNumber>
    </recommendedName>
</protein>
<comment type="function">
    <text evidence="1">Catalyzes the conversion of 1-hydroxy-2-methyl-2-(E)-butenyl 4-diphosphate (HMBPP) into a mixture of isopentenyl diphosphate (IPP) and dimethylallyl diphosphate (DMAPP). Acts in the terminal step of the DOXP/MEP pathway for isoprenoid precursor biosynthesis.</text>
</comment>
<comment type="catalytic activity">
    <reaction evidence="1">
        <text>isopentenyl diphosphate + 2 oxidized [2Fe-2S]-[ferredoxin] + H2O = (2E)-4-hydroxy-3-methylbut-2-enyl diphosphate + 2 reduced [2Fe-2S]-[ferredoxin] + 2 H(+)</text>
        <dbReference type="Rhea" id="RHEA:24488"/>
        <dbReference type="Rhea" id="RHEA-COMP:10000"/>
        <dbReference type="Rhea" id="RHEA-COMP:10001"/>
        <dbReference type="ChEBI" id="CHEBI:15377"/>
        <dbReference type="ChEBI" id="CHEBI:15378"/>
        <dbReference type="ChEBI" id="CHEBI:33737"/>
        <dbReference type="ChEBI" id="CHEBI:33738"/>
        <dbReference type="ChEBI" id="CHEBI:128753"/>
        <dbReference type="ChEBI" id="CHEBI:128769"/>
        <dbReference type="EC" id="1.17.7.4"/>
    </reaction>
</comment>
<comment type="catalytic activity">
    <reaction evidence="1">
        <text>dimethylallyl diphosphate + 2 oxidized [2Fe-2S]-[ferredoxin] + H2O = (2E)-4-hydroxy-3-methylbut-2-enyl diphosphate + 2 reduced [2Fe-2S]-[ferredoxin] + 2 H(+)</text>
        <dbReference type="Rhea" id="RHEA:24825"/>
        <dbReference type="Rhea" id="RHEA-COMP:10000"/>
        <dbReference type="Rhea" id="RHEA-COMP:10001"/>
        <dbReference type="ChEBI" id="CHEBI:15377"/>
        <dbReference type="ChEBI" id="CHEBI:15378"/>
        <dbReference type="ChEBI" id="CHEBI:33737"/>
        <dbReference type="ChEBI" id="CHEBI:33738"/>
        <dbReference type="ChEBI" id="CHEBI:57623"/>
        <dbReference type="ChEBI" id="CHEBI:128753"/>
        <dbReference type="EC" id="1.17.7.4"/>
    </reaction>
</comment>
<comment type="cofactor">
    <cofactor evidence="1">
        <name>[4Fe-4S] cluster</name>
        <dbReference type="ChEBI" id="CHEBI:49883"/>
    </cofactor>
    <text evidence="1">Binds 1 [4Fe-4S] cluster per subunit.</text>
</comment>
<comment type="pathway">
    <text evidence="1">Isoprenoid biosynthesis; dimethylallyl diphosphate biosynthesis; dimethylallyl diphosphate from (2E)-4-hydroxy-3-methylbutenyl diphosphate: step 1/1.</text>
</comment>
<comment type="pathway">
    <text evidence="1">Isoprenoid biosynthesis; isopentenyl diphosphate biosynthesis via DXP pathway; isopentenyl diphosphate from 1-deoxy-D-xylulose 5-phosphate: step 6/6.</text>
</comment>
<comment type="similarity">
    <text evidence="1">Belongs to the IspH family.</text>
</comment>
<reference key="1">
    <citation type="journal article" date="2000" name="Nucleic Acids Res.">
        <title>Complete genome sequence of the alkaliphilic bacterium Bacillus halodurans and genomic sequence comparison with Bacillus subtilis.</title>
        <authorList>
            <person name="Takami H."/>
            <person name="Nakasone K."/>
            <person name="Takaki Y."/>
            <person name="Maeno G."/>
            <person name="Sasaki R."/>
            <person name="Masui N."/>
            <person name="Fuji F."/>
            <person name="Hirama C."/>
            <person name="Nakamura Y."/>
            <person name="Ogasawara N."/>
            <person name="Kuhara S."/>
            <person name="Horikoshi K."/>
        </authorList>
    </citation>
    <scope>NUCLEOTIDE SEQUENCE [LARGE SCALE GENOMIC DNA]</scope>
    <source>
        <strain>ATCC BAA-125 / DSM 18197 / FERM 7344 / JCM 9153 / C-125</strain>
    </source>
</reference>
<dbReference type="EC" id="1.17.7.4" evidence="1"/>
<dbReference type="EMBL" id="BA000004">
    <property type="protein sequence ID" value="BAB05101.1"/>
    <property type="molecule type" value="Genomic_DNA"/>
</dbReference>
<dbReference type="PIR" id="F83822">
    <property type="entry name" value="F83822"/>
</dbReference>
<dbReference type="RefSeq" id="WP_010897547.1">
    <property type="nucleotide sequence ID" value="NC_002570.2"/>
</dbReference>
<dbReference type="SMR" id="Q9KD37"/>
<dbReference type="STRING" id="272558.gene:10727276"/>
<dbReference type="GeneID" id="87597006"/>
<dbReference type="KEGG" id="bha:BH1382"/>
<dbReference type="eggNOG" id="COG0761">
    <property type="taxonomic scope" value="Bacteria"/>
</dbReference>
<dbReference type="HOGENOM" id="CLU_027486_0_0_9"/>
<dbReference type="OrthoDB" id="9777362at2"/>
<dbReference type="UniPathway" id="UPA00056">
    <property type="reaction ID" value="UER00097"/>
</dbReference>
<dbReference type="UniPathway" id="UPA00059">
    <property type="reaction ID" value="UER00105"/>
</dbReference>
<dbReference type="Proteomes" id="UP000001258">
    <property type="component" value="Chromosome"/>
</dbReference>
<dbReference type="GO" id="GO:0051539">
    <property type="term" value="F:4 iron, 4 sulfur cluster binding"/>
    <property type="evidence" value="ECO:0007669"/>
    <property type="project" value="UniProtKB-UniRule"/>
</dbReference>
<dbReference type="GO" id="GO:0051745">
    <property type="term" value="F:4-hydroxy-3-methylbut-2-enyl diphosphate reductase activity"/>
    <property type="evidence" value="ECO:0007669"/>
    <property type="project" value="UniProtKB-UniRule"/>
</dbReference>
<dbReference type="GO" id="GO:0046872">
    <property type="term" value="F:metal ion binding"/>
    <property type="evidence" value="ECO:0007669"/>
    <property type="project" value="UniProtKB-KW"/>
</dbReference>
<dbReference type="GO" id="GO:0050992">
    <property type="term" value="P:dimethylallyl diphosphate biosynthetic process"/>
    <property type="evidence" value="ECO:0007669"/>
    <property type="project" value="UniProtKB-UniRule"/>
</dbReference>
<dbReference type="GO" id="GO:0019288">
    <property type="term" value="P:isopentenyl diphosphate biosynthetic process, methylerythritol 4-phosphate pathway"/>
    <property type="evidence" value="ECO:0007669"/>
    <property type="project" value="UniProtKB-UniRule"/>
</dbReference>
<dbReference type="GO" id="GO:0016114">
    <property type="term" value="P:terpenoid biosynthetic process"/>
    <property type="evidence" value="ECO:0007669"/>
    <property type="project" value="UniProtKB-UniRule"/>
</dbReference>
<dbReference type="CDD" id="cd13944">
    <property type="entry name" value="lytB_ispH"/>
    <property type="match status" value="1"/>
</dbReference>
<dbReference type="Gene3D" id="3.40.50.11270">
    <property type="match status" value="1"/>
</dbReference>
<dbReference type="Gene3D" id="3.40.1010.20">
    <property type="entry name" value="4-hydroxy-3-methylbut-2-enyl diphosphate reductase, catalytic domain"/>
    <property type="match status" value="2"/>
</dbReference>
<dbReference type="HAMAP" id="MF_00191">
    <property type="entry name" value="IspH"/>
    <property type="match status" value="1"/>
</dbReference>
<dbReference type="InterPro" id="IPR003451">
    <property type="entry name" value="LytB/IspH"/>
</dbReference>
<dbReference type="NCBIfam" id="TIGR00216">
    <property type="entry name" value="ispH_lytB"/>
    <property type="match status" value="1"/>
</dbReference>
<dbReference type="NCBIfam" id="NF002187">
    <property type="entry name" value="PRK01045.1-1"/>
    <property type="match status" value="1"/>
</dbReference>
<dbReference type="PANTHER" id="PTHR30426">
    <property type="entry name" value="4-HYDROXY-3-METHYLBUT-2-ENYL DIPHOSPHATE REDUCTASE"/>
    <property type="match status" value="1"/>
</dbReference>
<dbReference type="PANTHER" id="PTHR30426:SF0">
    <property type="entry name" value="4-HYDROXY-3-METHYLBUT-2-ENYL DIPHOSPHATE REDUCTASE"/>
    <property type="match status" value="1"/>
</dbReference>
<dbReference type="Pfam" id="PF02401">
    <property type="entry name" value="LYTB"/>
    <property type="match status" value="1"/>
</dbReference>
<name>ISPH_HALH5</name>
<sequence length="314" mass="34841">MNVVKISPRGYCYGVVDAMVLARQAAQNLDLPRPIYILGMIVHNKHVTDAFEEEGIISLDGPNRLDILKQVDKGTVIFTAHGVSPQVRKLAKEKGLTVVDATCPDVTRTHDLIREKSQEGYKFIYVGKKGHPEPEGAIGVAPEFVHLVENVEDVESLDISADKIIITNQTTMSQWDVSEIMKKAMEKYPQAEVHNEICLATQVRQEAVAEQARECDLVIVVGDPKSNNSNRLAQVSEQIAGTKAYRIGDVTELQQEWFDGVETVGVTAGASTPTPITKEVIAFIEKYDPSKPETWTPERKVTLQKILPKVKIKK</sequence>
<keyword id="KW-0004">4Fe-4S</keyword>
<keyword id="KW-0408">Iron</keyword>
<keyword id="KW-0411">Iron-sulfur</keyword>
<keyword id="KW-0414">Isoprene biosynthesis</keyword>
<keyword id="KW-0479">Metal-binding</keyword>
<keyword id="KW-0560">Oxidoreductase</keyword>
<keyword id="KW-1185">Reference proteome</keyword>
<gene>
    <name evidence="1" type="primary">ispH</name>
    <name type="synonym">lytB</name>
    <name type="ordered locus">BH1382</name>
</gene>
<organism>
    <name type="scientific">Halalkalibacterium halodurans (strain ATCC BAA-125 / DSM 18197 / FERM 7344 / JCM 9153 / C-125)</name>
    <name type="common">Bacillus halodurans</name>
    <dbReference type="NCBI Taxonomy" id="272558"/>
    <lineage>
        <taxon>Bacteria</taxon>
        <taxon>Bacillati</taxon>
        <taxon>Bacillota</taxon>
        <taxon>Bacilli</taxon>
        <taxon>Bacillales</taxon>
        <taxon>Bacillaceae</taxon>
        <taxon>Halalkalibacterium (ex Joshi et al. 2022)</taxon>
    </lineage>
</organism>
<proteinExistence type="inferred from homology"/>
<evidence type="ECO:0000255" key="1">
    <source>
        <dbReference type="HAMAP-Rule" id="MF_00191"/>
    </source>
</evidence>
<feature type="chain" id="PRO_0000128772" description="4-hydroxy-3-methylbut-2-enyl diphosphate reductase">
    <location>
        <begin position="1"/>
        <end position="314"/>
    </location>
</feature>
<feature type="active site" description="Proton donor" evidence="1">
    <location>
        <position position="133"/>
    </location>
</feature>
<feature type="binding site" evidence="1">
    <location>
        <position position="12"/>
    </location>
    <ligand>
        <name>[4Fe-4S] cluster</name>
        <dbReference type="ChEBI" id="CHEBI:49883"/>
    </ligand>
</feature>
<feature type="binding site" evidence="1">
    <location>
        <position position="43"/>
    </location>
    <ligand>
        <name>(2E)-4-hydroxy-3-methylbut-2-enyl diphosphate</name>
        <dbReference type="ChEBI" id="CHEBI:128753"/>
    </ligand>
</feature>
<feature type="binding site" evidence="1">
    <location>
        <position position="43"/>
    </location>
    <ligand>
        <name>dimethylallyl diphosphate</name>
        <dbReference type="ChEBI" id="CHEBI:57623"/>
    </ligand>
</feature>
<feature type="binding site" evidence="1">
    <location>
        <position position="43"/>
    </location>
    <ligand>
        <name>isopentenyl diphosphate</name>
        <dbReference type="ChEBI" id="CHEBI:128769"/>
    </ligand>
</feature>
<feature type="binding site" evidence="1">
    <location>
        <position position="81"/>
    </location>
    <ligand>
        <name>(2E)-4-hydroxy-3-methylbut-2-enyl diphosphate</name>
        <dbReference type="ChEBI" id="CHEBI:128753"/>
    </ligand>
</feature>
<feature type="binding site" evidence="1">
    <location>
        <position position="81"/>
    </location>
    <ligand>
        <name>dimethylallyl diphosphate</name>
        <dbReference type="ChEBI" id="CHEBI:57623"/>
    </ligand>
</feature>
<feature type="binding site" evidence="1">
    <location>
        <position position="81"/>
    </location>
    <ligand>
        <name>isopentenyl diphosphate</name>
        <dbReference type="ChEBI" id="CHEBI:128769"/>
    </ligand>
</feature>
<feature type="binding site" evidence="1">
    <location>
        <position position="103"/>
    </location>
    <ligand>
        <name>[4Fe-4S] cluster</name>
        <dbReference type="ChEBI" id="CHEBI:49883"/>
    </ligand>
</feature>
<feature type="binding site" evidence="1">
    <location>
        <position position="131"/>
    </location>
    <ligand>
        <name>(2E)-4-hydroxy-3-methylbut-2-enyl diphosphate</name>
        <dbReference type="ChEBI" id="CHEBI:128753"/>
    </ligand>
</feature>
<feature type="binding site" evidence="1">
    <location>
        <position position="131"/>
    </location>
    <ligand>
        <name>dimethylallyl diphosphate</name>
        <dbReference type="ChEBI" id="CHEBI:57623"/>
    </ligand>
</feature>
<feature type="binding site" evidence="1">
    <location>
        <position position="131"/>
    </location>
    <ligand>
        <name>isopentenyl diphosphate</name>
        <dbReference type="ChEBI" id="CHEBI:128769"/>
    </ligand>
</feature>
<feature type="binding site" evidence="1">
    <location>
        <position position="170"/>
    </location>
    <ligand>
        <name>(2E)-4-hydroxy-3-methylbut-2-enyl diphosphate</name>
        <dbReference type="ChEBI" id="CHEBI:128753"/>
    </ligand>
</feature>
<feature type="binding site" evidence="1">
    <location>
        <position position="198"/>
    </location>
    <ligand>
        <name>[4Fe-4S] cluster</name>
        <dbReference type="ChEBI" id="CHEBI:49883"/>
    </ligand>
</feature>
<feature type="binding site" evidence="1">
    <location>
        <position position="226"/>
    </location>
    <ligand>
        <name>(2E)-4-hydroxy-3-methylbut-2-enyl diphosphate</name>
        <dbReference type="ChEBI" id="CHEBI:128753"/>
    </ligand>
</feature>
<feature type="binding site" evidence="1">
    <location>
        <position position="226"/>
    </location>
    <ligand>
        <name>dimethylallyl diphosphate</name>
        <dbReference type="ChEBI" id="CHEBI:57623"/>
    </ligand>
</feature>
<feature type="binding site" evidence="1">
    <location>
        <position position="226"/>
    </location>
    <ligand>
        <name>isopentenyl diphosphate</name>
        <dbReference type="ChEBI" id="CHEBI:128769"/>
    </ligand>
</feature>
<feature type="binding site" evidence="1">
    <location>
        <position position="228"/>
    </location>
    <ligand>
        <name>(2E)-4-hydroxy-3-methylbut-2-enyl diphosphate</name>
        <dbReference type="ChEBI" id="CHEBI:128753"/>
    </ligand>
</feature>
<feature type="binding site" evidence="1">
    <location>
        <position position="228"/>
    </location>
    <ligand>
        <name>dimethylallyl diphosphate</name>
        <dbReference type="ChEBI" id="CHEBI:57623"/>
    </ligand>
</feature>
<feature type="binding site" evidence="1">
    <location>
        <position position="228"/>
    </location>
    <ligand>
        <name>isopentenyl diphosphate</name>
        <dbReference type="ChEBI" id="CHEBI:128769"/>
    </ligand>
</feature>
<feature type="binding site" evidence="1">
    <location>
        <position position="271"/>
    </location>
    <ligand>
        <name>(2E)-4-hydroxy-3-methylbut-2-enyl diphosphate</name>
        <dbReference type="ChEBI" id="CHEBI:128753"/>
    </ligand>
</feature>
<feature type="binding site" evidence="1">
    <location>
        <position position="271"/>
    </location>
    <ligand>
        <name>dimethylallyl diphosphate</name>
        <dbReference type="ChEBI" id="CHEBI:57623"/>
    </ligand>
</feature>
<feature type="binding site" evidence="1">
    <location>
        <position position="271"/>
    </location>
    <ligand>
        <name>isopentenyl diphosphate</name>
        <dbReference type="ChEBI" id="CHEBI:128769"/>
    </ligand>
</feature>